<comment type="function">
    <text evidence="3 5 6 7">V region of the variable domain of T cell receptor (TR) beta chain that participates in the antigen recognition (PubMed:24600447). Alpha-beta T cell receptors are antigen specific receptors which are essential to the immune response and are present on the cell surface of T lymphocytes. Recognize peptide-major histocompatibility (MH) (pMH) complexes that are displayed by antigen presenting cells (APC), a prerequisite for efficient T cell adaptive immunity against pathogens (PubMed:25493333). Binding of alpha-beta TR to pMH complex initiates TR-CD3 clustering on the cell surface and intracellular activation of LCK that phosphorylates the ITAM motifs of CD3G, CD3D, CD3E and CD247 enabling the recruitment of ZAP70. In turn ZAP70 phosphorylates LAT, which recruits numerous signaling molecules to form the LAT signalosome. The LAT signalosome propagates signal branching to three major signaling pathways, the calcium, the mitogen-activated protein kinase (MAPK) kinase and the nuclear factor NF-kappa-B (NF-kB) pathways, leading to the mobilization of transcription factors that are critical for gene expression and essential for T cell growth and differentiation (PubMed:23524462). The T cell repertoire is generated in the thymus, by V-(D)-J rearrangement. This repertoire is then shaped by intrathymic selection events to generate a peripheral T cell pool of self-MH restricted, non-autoaggressive T cells. Post-thymic interaction of alpha-beta TR with the pMH complexes shapes TR structural and functional avidity (PubMed:15040585).</text>
</comment>
<comment type="subunit">
    <text evidence="4">Alpha-beta TR is a heterodimer composed of an alpha and beta chain; disulfide-linked. The alpha-beta TR is associated with the transmembrane signaling CD3 coreceptor proteins to form the TR-CD3 (TcR or TCR). The assembly of alpha-beta TR heterodimers with CD3 occurs in the endoplasmic reticulum where a single alpha-beta TR heterodimer associates with one CD3D-CD3E heterodimer, one CD3G-CD3E heterodimer and one CD247 homodimer forming a stable octameric structure. CD3D-CD3E and CD3G-CD3E heterodimers preferentially associate with TR alpha and TR beta chains, respectively. The association of the CD247 homodimer is the last step of TcR assembly in the endoplasmic reticulum and is required for transport to the cell surface.</text>
</comment>
<comment type="subcellular location">
    <subcellularLocation>
        <location evidence="4">Cell membrane</location>
    </subcellularLocation>
</comment>
<comment type="polymorphism">
    <text evidence="9">There are several alleles. The sequence shown is that of IMGT allele TRBV6-9*01.</text>
</comment>
<reference key="1">
    <citation type="journal article" date="2003" name="Nature">
        <title>The DNA sequence of human chromosome 7.</title>
        <authorList>
            <person name="Hillier L.W."/>
            <person name="Fulton R.S."/>
            <person name="Fulton L.A."/>
            <person name="Graves T.A."/>
            <person name="Pepin K.H."/>
            <person name="Wagner-McPherson C."/>
            <person name="Layman D."/>
            <person name="Maas J."/>
            <person name="Jaeger S."/>
            <person name="Walker R."/>
            <person name="Wylie K."/>
            <person name="Sekhon M."/>
            <person name="Becker M.C."/>
            <person name="O'Laughlin M.D."/>
            <person name="Schaller M.E."/>
            <person name="Fewell G.A."/>
            <person name="Delehaunty K.D."/>
            <person name="Miner T.L."/>
            <person name="Nash W.E."/>
            <person name="Cordes M."/>
            <person name="Du H."/>
            <person name="Sun H."/>
            <person name="Edwards J."/>
            <person name="Bradshaw-Cordum H."/>
            <person name="Ali J."/>
            <person name="Andrews S."/>
            <person name="Isak A."/>
            <person name="Vanbrunt A."/>
            <person name="Nguyen C."/>
            <person name="Du F."/>
            <person name="Lamar B."/>
            <person name="Courtney L."/>
            <person name="Kalicki J."/>
            <person name="Ozersky P."/>
            <person name="Bielicki L."/>
            <person name="Scott K."/>
            <person name="Holmes A."/>
            <person name="Harkins R."/>
            <person name="Harris A."/>
            <person name="Strong C.M."/>
            <person name="Hou S."/>
            <person name="Tomlinson C."/>
            <person name="Dauphin-Kohlberg S."/>
            <person name="Kozlowicz-Reilly A."/>
            <person name="Leonard S."/>
            <person name="Rohlfing T."/>
            <person name="Rock S.M."/>
            <person name="Tin-Wollam A.-M."/>
            <person name="Abbott A."/>
            <person name="Minx P."/>
            <person name="Maupin R."/>
            <person name="Strowmatt C."/>
            <person name="Latreille P."/>
            <person name="Miller N."/>
            <person name="Johnson D."/>
            <person name="Murray J."/>
            <person name="Woessner J.P."/>
            <person name="Wendl M.C."/>
            <person name="Yang S.-P."/>
            <person name="Schultz B.R."/>
            <person name="Wallis J.W."/>
            <person name="Spieth J."/>
            <person name="Bieri T.A."/>
            <person name="Nelson J.O."/>
            <person name="Berkowicz N."/>
            <person name="Wohldmann P.E."/>
            <person name="Cook L.L."/>
            <person name="Hickenbotham M.T."/>
            <person name="Eldred J."/>
            <person name="Williams D."/>
            <person name="Bedell J.A."/>
            <person name="Mardis E.R."/>
            <person name="Clifton S.W."/>
            <person name="Chissoe S.L."/>
            <person name="Marra M.A."/>
            <person name="Raymond C."/>
            <person name="Haugen E."/>
            <person name="Gillett W."/>
            <person name="Zhou Y."/>
            <person name="James R."/>
            <person name="Phelps K."/>
            <person name="Iadanoto S."/>
            <person name="Bubb K."/>
            <person name="Simms E."/>
            <person name="Levy R."/>
            <person name="Clendenning J."/>
            <person name="Kaul R."/>
            <person name="Kent W.J."/>
            <person name="Furey T.S."/>
            <person name="Baertsch R.A."/>
            <person name="Brent M.R."/>
            <person name="Keibler E."/>
            <person name="Flicek P."/>
            <person name="Bork P."/>
            <person name="Suyama M."/>
            <person name="Bailey J.A."/>
            <person name="Portnoy M.E."/>
            <person name="Torrents D."/>
            <person name="Chinwalla A.T."/>
            <person name="Gish W.R."/>
            <person name="Eddy S.R."/>
            <person name="McPherson J.D."/>
            <person name="Olson M.V."/>
            <person name="Eichler E.E."/>
            <person name="Green E.D."/>
            <person name="Waterston R.H."/>
            <person name="Wilson R.K."/>
        </authorList>
    </citation>
    <scope>NUCLEOTIDE SEQUENCE [LARGE SCALE GENOMIC DNA] (IMGT ALLELE TRBV6-9*01)</scope>
</reference>
<reference key="2">
    <citation type="book" date="2001" name="The T Cell Receptor FactsBook.">
        <title>The T Cell Receptor FactsBook.</title>
        <editorList>
            <person name="Lefranc M.P."/>
            <person name="Lefranc G."/>
        </editorList>
        <authorList>
            <person name="Lefranc M.P."/>
            <person name="Lefranc G."/>
        </authorList>
    </citation>
    <scope>NOMENCLATURE</scope>
</reference>
<reference key="3">
    <citation type="journal article" date="2004" name="Nat. Rev. Immunol.">
        <title>The many important facets of T-cell repertoire diversity.</title>
        <authorList>
            <person name="Nikolich-Zugich J."/>
            <person name="Slifka M.K."/>
            <person name="Messaoudi I."/>
        </authorList>
    </citation>
    <scope>REVIEW ON T CELL REPERTOIRE DIVERSITY</scope>
</reference>
<reference key="4">
    <citation type="journal article" date="2010" name="Cold Spring Harb. Perspect. Biol.">
        <title>Structural biology of the T-cell receptor: insights into receptor assembly, ligand recognition, and initiation of signaling.</title>
        <authorList>
            <person name="Wucherpfennig K.W."/>
            <person name="Gagnon E."/>
            <person name="Call M.J."/>
            <person name="Huseby E.S."/>
            <person name="Call M.E."/>
        </authorList>
    </citation>
    <scope>REVIEW ON T CELL RECEPTOR-CD3 COMPLEX ASSEMBLY</scope>
    <scope>SUBCELLULAR LOCATION</scope>
</reference>
<reference key="5">
    <citation type="journal article" date="2013" name="Nat. Rev. Immunol.">
        <title>T cell receptor signalling networks: branched, diversified and bounded.</title>
        <authorList>
            <person name="Brownlie R.J."/>
            <person name="Zamoyska R."/>
        </authorList>
    </citation>
    <scope>REVIEW ON T CELL RECEPTOR SIGNALING</scope>
</reference>
<reference key="6">
    <citation type="journal article" date="2014" name="Front. Immunol.">
        <title>Immunoglobulin and T Cell Receptor Genes: IMGT((R)) and the Birth and Rise of Immunoinformatics.</title>
        <authorList>
            <person name="Lefranc M.P."/>
        </authorList>
    </citation>
    <scope>NOMENCLATURE</scope>
</reference>
<reference key="7">
    <citation type="journal article" date="2015" name="Annu. Rev. Immunol.">
        <title>T cell antigen receptor recognition of antigen-presenting molecules.</title>
        <authorList>
            <person name="Rossjohn J."/>
            <person name="Gras S."/>
            <person name="Miles J.J."/>
            <person name="Turner S.J."/>
            <person name="Godfrey D.I."/>
            <person name="McCluskey J."/>
        </authorList>
    </citation>
    <scope>REVIEW ON FUNCTION</scope>
</reference>
<evidence type="ECO:0000255" key="1"/>
<evidence type="ECO:0000255" key="2">
    <source>
        <dbReference type="PROSITE-ProRule" id="PRU00114"/>
    </source>
</evidence>
<evidence type="ECO:0000303" key="3">
    <source>
    </source>
</evidence>
<evidence type="ECO:0000303" key="4">
    <source>
    </source>
</evidence>
<evidence type="ECO:0000303" key="5">
    <source>
    </source>
</evidence>
<evidence type="ECO:0000303" key="6">
    <source>
    </source>
</evidence>
<evidence type="ECO:0000303" key="7">
    <source>
    </source>
</evidence>
<evidence type="ECO:0000303" key="8">
    <source ref="2"/>
</evidence>
<evidence type="ECO:0000305" key="9"/>
<feature type="signal peptide" evidence="1">
    <location>
        <begin position="1"/>
        <end position="21"/>
    </location>
</feature>
<feature type="chain" id="PRO_5008217030" description="T cell receptor beta variable 6-9" evidence="1">
    <location>
        <begin position="22"/>
        <end position="114"/>
    </location>
</feature>
<feature type="domain" description="Ig-like" evidence="2">
    <location>
        <begin position="22"/>
        <end position="114" status="greater than"/>
    </location>
</feature>
<feature type="glycosylation site" description="N-linked (GlcNAc...) asparagine" evidence="1">
    <location>
        <position position="84"/>
    </location>
</feature>
<feature type="disulfide bond" evidence="2">
    <location>
        <begin position="42"/>
        <end position="110"/>
    </location>
</feature>
<feature type="non-terminal residue">
    <location>
        <position position="114"/>
    </location>
</feature>
<sequence length="114" mass="12484">MSIGLLCCVAFSLLWAGPVNAGVTQTPKFHILKTGQSMTLQCAQDMNHGYLSWYRQDPGMGLRRIHYSVAAGITDKGEVPDGYNVSRSNTEDFPLRLESAAPSQTSVYFCASSY</sequence>
<accession>A0A0J9YX75</accession>
<name>TVB69_HUMAN</name>
<dbReference type="EMBL" id="AC233282">
    <property type="status" value="NOT_ANNOTATED_CDS"/>
    <property type="molecule type" value="Genomic_DNA"/>
</dbReference>
<dbReference type="SMR" id="A0A0J9YX75"/>
<dbReference type="FunCoup" id="A0A0J9YX75">
    <property type="interactions" value="843"/>
</dbReference>
<dbReference type="IMGT_GENE-DB" id="TRBV6-9"/>
<dbReference type="GlyCosmos" id="A0A0J9YX75">
    <property type="glycosylation" value="1 site, No reported glycans"/>
</dbReference>
<dbReference type="GlyGen" id="A0A0J9YX75">
    <property type="glycosylation" value="1 site"/>
</dbReference>
<dbReference type="BioMuta" id="ENSG00000282610"/>
<dbReference type="PeptideAtlas" id="A0A0J9YX75"/>
<dbReference type="AGR" id="HGNC:12234"/>
<dbReference type="GeneCards" id="TRBV6-9"/>
<dbReference type="HGNC" id="HGNC:12234">
    <property type="gene designation" value="TRBV6-9"/>
</dbReference>
<dbReference type="neXtProt" id="NX_A0A0J9YX75"/>
<dbReference type="InParanoid" id="A0A0J9YX75"/>
<dbReference type="PAN-GO" id="A0A0J9YX75">
    <property type="GO annotations" value="2 GO annotations based on evolutionary models"/>
</dbReference>
<dbReference type="Pharos" id="A0A0J9YX75">
    <property type="development level" value="Tdark"/>
</dbReference>
<dbReference type="PRO" id="PR:A0A0J9YX75"/>
<dbReference type="Proteomes" id="UP000005640">
    <property type="component" value="Unplaced"/>
</dbReference>
<dbReference type="RNAct" id="A0A0J9YX75">
    <property type="molecule type" value="protein"/>
</dbReference>
<dbReference type="GO" id="GO:0005886">
    <property type="term" value="C:plasma membrane"/>
    <property type="evidence" value="ECO:0000318"/>
    <property type="project" value="GO_Central"/>
</dbReference>
<dbReference type="GO" id="GO:0042101">
    <property type="term" value="C:T cell receptor complex"/>
    <property type="evidence" value="ECO:0007669"/>
    <property type="project" value="UniProtKB-KW"/>
</dbReference>
<dbReference type="GO" id="GO:0002250">
    <property type="term" value="P:adaptive immune response"/>
    <property type="evidence" value="ECO:0007669"/>
    <property type="project" value="UniProtKB-KW"/>
</dbReference>
<dbReference type="GO" id="GO:0007166">
    <property type="term" value="P:cell surface receptor signaling pathway"/>
    <property type="evidence" value="ECO:0000318"/>
    <property type="project" value="GO_Central"/>
</dbReference>
<dbReference type="Gene3D" id="2.60.40.10">
    <property type="entry name" value="Immunoglobulins"/>
    <property type="match status" value="1"/>
</dbReference>
<dbReference type="InterPro" id="IPR007110">
    <property type="entry name" value="Ig-like_dom"/>
</dbReference>
<dbReference type="InterPro" id="IPR036179">
    <property type="entry name" value="Ig-like_dom_sf"/>
</dbReference>
<dbReference type="InterPro" id="IPR013783">
    <property type="entry name" value="Ig-like_fold"/>
</dbReference>
<dbReference type="InterPro" id="IPR013106">
    <property type="entry name" value="Ig_V-set"/>
</dbReference>
<dbReference type="InterPro" id="IPR050413">
    <property type="entry name" value="TCR_beta_variable"/>
</dbReference>
<dbReference type="PANTHER" id="PTHR23268:SF86">
    <property type="entry name" value="T CELL RECEPTOR BETA VARIABLE 6-8-RELATED"/>
    <property type="match status" value="1"/>
</dbReference>
<dbReference type="PANTHER" id="PTHR23268">
    <property type="entry name" value="T-CELL RECEPTOR BETA CHAIN"/>
    <property type="match status" value="1"/>
</dbReference>
<dbReference type="Pfam" id="PF07686">
    <property type="entry name" value="V-set"/>
    <property type="match status" value="1"/>
</dbReference>
<dbReference type="SMART" id="SM00406">
    <property type="entry name" value="IGv"/>
    <property type="match status" value="1"/>
</dbReference>
<dbReference type="SUPFAM" id="SSF48726">
    <property type="entry name" value="Immunoglobulin"/>
    <property type="match status" value="1"/>
</dbReference>
<dbReference type="PROSITE" id="PS50835">
    <property type="entry name" value="IG_LIKE"/>
    <property type="match status" value="1"/>
</dbReference>
<protein>
    <recommendedName>
        <fullName evidence="8">T cell receptor beta variable 6-9</fullName>
    </recommendedName>
</protein>
<keyword id="KW-1064">Adaptive immunity</keyword>
<keyword id="KW-1003">Cell membrane</keyword>
<keyword id="KW-1015">Disulfide bond</keyword>
<keyword id="KW-0325">Glycoprotein</keyword>
<keyword id="KW-0391">Immunity</keyword>
<keyword id="KW-0393">Immunoglobulin domain</keyword>
<keyword id="KW-0472">Membrane</keyword>
<keyword id="KW-0675">Receptor</keyword>
<keyword id="KW-1185">Reference proteome</keyword>
<keyword id="KW-0732">Signal</keyword>
<keyword id="KW-1279">T cell receptor</keyword>
<proteinExistence type="inferred from homology"/>
<gene>
    <name evidence="8" type="primary">TRBV6-9</name>
</gene>
<organism>
    <name type="scientific">Homo sapiens</name>
    <name type="common">Human</name>
    <dbReference type="NCBI Taxonomy" id="9606"/>
    <lineage>
        <taxon>Eukaryota</taxon>
        <taxon>Metazoa</taxon>
        <taxon>Chordata</taxon>
        <taxon>Craniata</taxon>
        <taxon>Vertebrata</taxon>
        <taxon>Euteleostomi</taxon>
        <taxon>Mammalia</taxon>
        <taxon>Eutheria</taxon>
        <taxon>Euarchontoglires</taxon>
        <taxon>Primates</taxon>
        <taxon>Haplorrhini</taxon>
        <taxon>Catarrhini</taxon>
        <taxon>Hominidae</taxon>
        <taxon>Homo</taxon>
    </lineage>
</organism>